<sequence>MARPGNIALVTARSAGLRGSGQPQGRRQQQAQGQQRSASLPGQRSKEKKKVNCKPKNQDEQEIPFRLREIMRSRQEMKKTLSNKKRKKEAQVAFKKTLEKEAKGEEPDIAVPKFKQRKGESDVAYVQRMEQEAQHVLFLSKNQAPRQPEVQAAPKKEKSERKKAFQKRRLEKAQRKREARAVDRLEQELLKDTVKFGEVVLQPPELTVQPRRSTSRDAPGKKSLMLKKMLLGPGGGSPAPATSLARQRILGEERERAVQAYRALKKLHRQEMTPAQPPGSSFQRQGHACL</sequence>
<feature type="chain" id="PRO_0000288453" description="Coiled-coil domain-containing protein 137">
    <location>
        <begin position="1"/>
        <end position="290"/>
    </location>
</feature>
<feature type="region of interest" description="Disordered" evidence="3">
    <location>
        <begin position="1"/>
        <end position="92"/>
    </location>
</feature>
<feature type="region of interest" description="Disordered" evidence="3">
    <location>
        <begin position="98"/>
        <end position="117"/>
    </location>
</feature>
<feature type="region of interest" description="Disordered" evidence="3">
    <location>
        <begin position="139"/>
        <end position="181"/>
    </location>
</feature>
<feature type="region of interest" description="Disordered" evidence="3">
    <location>
        <begin position="269"/>
        <end position="290"/>
    </location>
</feature>
<feature type="coiled-coil region" evidence="2">
    <location>
        <begin position="66"/>
        <end position="89"/>
    </location>
</feature>
<feature type="coiled-coil region" evidence="2">
    <location>
        <begin position="155"/>
        <end position="192"/>
    </location>
</feature>
<feature type="compositionally biased region" description="Low complexity" evidence="3">
    <location>
        <begin position="20"/>
        <end position="39"/>
    </location>
</feature>
<feature type="compositionally biased region" description="Basic and acidic residues" evidence="3">
    <location>
        <begin position="56"/>
        <end position="79"/>
    </location>
</feature>
<feature type="compositionally biased region" description="Basic and acidic residues" evidence="3">
    <location>
        <begin position="154"/>
        <end position="163"/>
    </location>
</feature>
<feature type="compositionally biased region" description="Basic residues" evidence="3">
    <location>
        <begin position="164"/>
        <end position="178"/>
    </location>
</feature>
<dbReference type="EMBL" id="AK156682">
    <property type="protein sequence ID" value="BAE33806.1"/>
    <property type="status" value="ALT_SEQ"/>
    <property type="molecule type" value="mRNA"/>
</dbReference>
<dbReference type="EMBL" id="AL669855">
    <property type="status" value="NOT_ANNOTATED_CDS"/>
    <property type="molecule type" value="Genomic_DNA"/>
</dbReference>
<dbReference type="EMBL" id="BC026662">
    <property type="protein sequence ID" value="AAH26662.1"/>
    <property type="molecule type" value="mRNA"/>
</dbReference>
<dbReference type="CCDS" id="CCDS25736.1"/>
<dbReference type="RefSeq" id="NP_690020.1">
    <property type="nucleotide sequence ID" value="NM_152807.4"/>
</dbReference>
<dbReference type="BioGRID" id="212079">
    <property type="interactions" value="1"/>
</dbReference>
<dbReference type="FunCoup" id="Q8R0K4">
    <property type="interactions" value="2998"/>
</dbReference>
<dbReference type="IntAct" id="Q8R0K4">
    <property type="interactions" value="1"/>
</dbReference>
<dbReference type="MINT" id="Q8R0K4"/>
<dbReference type="STRING" id="10090.ENSMUSP00000062540"/>
<dbReference type="GlyGen" id="Q8R0K4">
    <property type="glycosylation" value="1 site, 1 O-linked glycan (1 site)"/>
</dbReference>
<dbReference type="iPTMnet" id="Q8R0K4"/>
<dbReference type="PhosphoSitePlus" id="Q8R0K4"/>
<dbReference type="PaxDb" id="10090-ENSMUSP00000062540"/>
<dbReference type="PeptideAtlas" id="Q8R0K4"/>
<dbReference type="ProteomicsDB" id="265285"/>
<dbReference type="Pumba" id="Q8R0K4"/>
<dbReference type="Antibodypedia" id="66426">
    <property type="antibodies" value="85 antibodies from 18 providers"/>
</dbReference>
<dbReference type="Ensembl" id="ENSMUST00000058370.14">
    <property type="protein sequence ID" value="ENSMUSP00000062540.8"/>
    <property type="gene ID" value="ENSMUSG00000049957.15"/>
</dbReference>
<dbReference type="GeneID" id="67291"/>
<dbReference type="KEGG" id="mmu:67291"/>
<dbReference type="UCSC" id="uc007msu.1">
    <property type="organism name" value="mouse"/>
</dbReference>
<dbReference type="AGR" id="MGI:1914541"/>
<dbReference type="CTD" id="339230"/>
<dbReference type="MGI" id="MGI:1914541">
    <property type="gene designation" value="Ccdc137"/>
</dbReference>
<dbReference type="VEuPathDB" id="HostDB:ENSMUSG00000049957"/>
<dbReference type="eggNOG" id="ENOG502S2F4">
    <property type="taxonomic scope" value="Eukaryota"/>
</dbReference>
<dbReference type="GeneTree" id="ENSGT00390000004169"/>
<dbReference type="HOGENOM" id="CLU_079794_0_0_1"/>
<dbReference type="InParanoid" id="Q8R0K4"/>
<dbReference type="OMA" id="HHGVRDP"/>
<dbReference type="OrthoDB" id="5876637at2759"/>
<dbReference type="PhylomeDB" id="Q8R0K4"/>
<dbReference type="TreeFam" id="TF332311"/>
<dbReference type="BioGRID-ORCS" id="67291">
    <property type="hits" value="19 hits in 80 CRISPR screens"/>
</dbReference>
<dbReference type="ChiTaRS" id="Ccdc137">
    <property type="organism name" value="mouse"/>
</dbReference>
<dbReference type="PRO" id="PR:Q8R0K4"/>
<dbReference type="Proteomes" id="UP000000589">
    <property type="component" value="Chromosome 11"/>
</dbReference>
<dbReference type="RNAct" id="Q8R0K4">
    <property type="molecule type" value="protein"/>
</dbReference>
<dbReference type="Bgee" id="ENSMUSG00000049957">
    <property type="expression patterns" value="Expressed in ear vesicle and 249 other cell types or tissues"/>
</dbReference>
<dbReference type="ExpressionAtlas" id="Q8R0K4">
    <property type="expression patterns" value="baseline and differential"/>
</dbReference>
<dbReference type="GO" id="GO:0005694">
    <property type="term" value="C:chromosome"/>
    <property type="evidence" value="ECO:0000250"/>
    <property type="project" value="UniProtKB"/>
</dbReference>
<dbReference type="GO" id="GO:0005730">
    <property type="term" value="C:nucleolus"/>
    <property type="evidence" value="ECO:0007669"/>
    <property type="project" value="Ensembl"/>
</dbReference>
<dbReference type="GO" id="GO:0005654">
    <property type="term" value="C:nucleoplasm"/>
    <property type="evidence" value="ECO:0007669"/>
    <property type="project" value="Ensembl"/>
</dbReference>
<dbReference type="InterPro" id="IPR026680">
    <property type="entry name" value="CCDC137"/>
</dbReference>
<dbReference type="PANTHER" id="PTHR21838">
    <property type="entry name" value="COILED-COIL DOMAIN-CONTAINING PROTEIN 137"/>
    <property type="match status" value="1"/>
</dbReference>
<dbReference type="PANTHER" id="PTHR21838:SF2">
    <property type="entry name" value="COILED-COIL DOMAIN-CONTAINING PROTEIN 137"/>
    <property type="match status" value="1"/>
</dbReference>
<organism>
    <name type="scientific">Mus musculus</name>
    <name type="common">Mouse</name>
    <dbReference type="NCBI Taxonomy" id="10090"/>
    <lineage>
        <taxon>Eukaryota</taxon>
        <taxon>Metazoa</taxon>
        <taxon>Chordata</taxon>
        <taxon>Craniata</taxon>
        <taxon>Vertebrata</taxon>
        <taxon>Euteleostomi</taxon>
        <taxon>Mammalia</taxon>
        <taxon>Eutheria</taxon>
        <taxon>Euarchontoglires</taxon>
        <taxon>Glires</taxon>
        <taxon>Rodentia</taxon>
        <taxon>Myomorpha</taxon>
        <taxon>Muroidea</taxon>
        <taxon>Muridae</taxon>
        <taxon>Murinae</taxon>
        <taxon>Mus</taxon>
        <taxon>Mus</taxon>
    </lineage>
</organism>
<keyword id="KW-0158">Chromosome</keyword>
<keyword id="KW-0175">Coiled coil</keyword>
<keyword id="KW-1185">Reference proteome</keyword>
<accession>Q8R0K4</accession>
<accession>Q3U0P6</accession>
<reference key="1">
    <citation type="journal article" date="2005" name="Science">
        <title>The transcriptional landscape of the mammalian genome.</title>
        <authorList>
            <person name="Carninci P."/>
            <person name="Kasukawa T."/>
            <person name="Katayama S."/>
            <person name="Gough J."/>
            <person name="Frith M.C."/>
            <person name="Maeda N."/>
            <person name="Oyama R."/>
            <person name="Ravasi T."/>
            <person name="Lenhard B."/>
            <person name="Wells C."/>
            <person name="Kodzius R."/>
            <person name="Shimokawa K."/>
            <person name="Bajic V.B."/>
            <person name="Brenner S.E."/>
            <person name="Batalov S."/>
            <person name="Forrest A.R."/>
            <person name="Zavolan M."/>
            <person name="Davis M.J."/>
            <person name="Wilming L.G."/>
            <person name="Aidinis V."/>
            <person name="Allen J.E."/>
            <person name="Ambesi-Impiombato A."/>
            <person name="Apweiler R."/>
            <person name="Aturaliya R.N."/>
            <person name="Bailey T.L."/>
            <person name="Bansal M."/>
            <person name="Baxter L."/>
            <person name="Beisel K.W."/>
            <person name="Bersano T."/>
            <person name="Bono H."/>
            <person name="Chalk A.M."/>
            <person name="Chiu K.P."/>
            <person name="Choudhary V."/>
            <person name="Christoffels A."/>
            <person name="Clutterbuck D.R."/>
            <person name="Crowe M.L."/>
            <person name="Dalla E."/>
            <person name="Dalrymple B.P."/>
            <person name="de Bono B."/>
            <person name="Della Gatta G."/>
            <person name="di Bernardo D."/>
            <person name="Down T."/>
            <person name="Engstrom P."/>
            <person name="Fagiolini M."/>
            <person name="Faulkner G."/>
            <person name="Fletcher C.F."/>
            <person name="Fukushima T."/>
            <person name="Furuno M."/>
            <person name="Futaki S."/>
            <person name="Gariboldi M."/>
            <person name="Georgii-Hemming P."/>
            <person name="Gingeras T.R."/>
            <person name="Gojobori T."/>
            <person name="Green R.E."/>
            <person name="Gustincich S."/>
            <person name="Harbers M."/>
            <person name="Hayashi Y."/>
            <person name="Hensch T.K."/>
            <person name="Hirokawa N."/>
            <person name="Hill D."/>
            <person name="Huminiecki L."/>
            <person name="Iacono M."/>
            <person name="Ikeo K."/>
            <person name="Iwama A."/>
            <person name="Ishikawa T."/>
            <person name="Jakt M."/>
            <person name="Kanapin A."/>
            <person name="Katoh M."/>
            <person name="Kawasawa Y."/>
            <person name="Kelso J."/>
            <person name="Kitamura H."/>
            <person name="Kitano H."/>
            <person name="Kollias G."/>
            <person name="Krishnan S.P."/>
            <person name="Kruger A."/>
            <person name="Kummerfeld S.K."/>
            <person name="Kurochkin I.V."/>
            <person name="Lareau L.F."/>
            <person name="Lazarevic D."/>
            <person name="Lipovich L."/>
            <person name="Liu J."/>
            <person name="Liuni S."/>
            <person name="McWilliam S."/>
            <person name="Madan Babu M."/>
            <person name="Madera M."/>
            <person name="Marchionni L."/>
            <person name="Matsuda H."/>
            <person name="Matsuzawa S."/>
            <person name="Miki H."/>
            <person name="Mignone F."/>
            <person name="Miyake S."/>
            <person name="Morris K."/>
            <person name="Mottagui-Tabar S."/>
            <person name="Mulder N."/>
            <person name="Nakano N."/>
            <person name="Nakauchi H."/>
            <person name="Ng P."/>
            <person name="Nilsson R."/>
            <person name="Nishiguchi S."/>
            <person name="Nishikawa S."/>
            <person name="Nori F."/>
            <person name="Ohara O."/>
            <person name="Okazaki Y."/>
            <person name="Orlando V."/>
            <person name="Pang K.C."/>
            <person name="Pavan W.J."/>
            <person name="Pavesi G."/>
            <person name="Pesole G."/>
            <person name="Petrovsky N."/>
            <person name="Piazza S."/>
            <person name="Reed J."/>
            <person name="Reid J.F."/>
            <person name="Ring B.Z."/>
            <person name="Ringwald M."/>
            <person name="Rost B."/>
            <person name="Ruan Y."/>
            <person name="Salzberg S.L."/>
            <person name="Sandelin A."/>
            <person name="Schneider C."/>
            <person name="Schoenbach C."/>
            <person name="Sekiguchi K."/>
            <person name="Semple C.A."/>
            <person name="Seno S."/>
            <person name="Sessa L."/>
            <person name="Sheng Y."/>
            <person name="Shibata Y."/>
            <person name="Shimada H."/>
            <person name="Shimada K."/>
            <person name="Silva D."/>
            <person name="Sinclair B."/>
            <person name="Sperling S."/>
            <person name="Stupka E."/>
            <person name="Sugiura K."/>
            <person name="Sultana R."/>
            <person name="Takenaka Y."/>
            <person name="Taki K."/>
            <person name="Tammoja K."/>
            <person name="Tan S.L."/>
            <person name="Tang S."/>
            <person name="Taylor M.S."/>
            <person name="Tegner J."/>
            <person name="Teichmann S.A."/>
            <person name="Ueda H.R."/>
            <person name="van Nimwegen E."/>
            <person name="Verardo R."/>
            <person name="Wei C.L."/>
            <person name="Yagi K."/>
            <person name="Yamanishi H."/>
            <person name="Zabarovsky E."/>
            <person name="Zhu S."/>
            <person name="Zimmer A."/>
            <person name="Hide W."/>
            <person name="Bult C."/>
            <person name="Grimmond S.M."/>
            <person name="Teasdale R.D."/>
            <person name="Liu E.T."/>
            <person name="Brusic V."/>
            <person name="Quackenbush J."/>
            <person name="Wahlestedt C."/>
            <person name="Mattick J.S."/>
            <person name="Hume D.A."/>
            <person name="Kai C."/>
            <person name="Sasaki D."/>
            <person name="Tomaru Y."/>
            <person name="Fukuda S."/>
            <person name="Kanamori-Katayama M."/>
            <person name="Suzuki M."/>
            <person name="Aoki J."/>
            <person name="Arakawa T."/>
            <person name="Iida J."/>
            <person name="Imamura K."/>
            <person name="Itoh M."/>
            <person name="Kato T."/>
            <person name="Kawaji H."/>
            <person name="Kawagashira N."/>
            <person name="Kawashima T."/>
            <person name="Kojima M."/>
            <person name="Kondo S."/>
            <person name="Konno H."/>
            <person name="Nakano K."/>
            <person name="Ninomiya N."/>
            <person name="Nishio T."/>
            <person name="Okada M."/>
            <person name="Plessy C."/>
            <person name="Shibata K."/>
            <person name="Shiraki T."/>
            <person name="Suzuki S."/>
            <person name="Tagami M."/>
            <person name="Waki K."/>
            <person name="Watahiki A."/>
            <person name="Okamura-Oho Y."/>
            <person name="Suzuki H."/>
            <person name="Kawai J."/>
            <person name="Hayashizaki Y."/>
        </authorList>
    </citation>
    <scope>NUCLEOTIDE SEQUENCE [LARGE SCALE MRNA]</scope>
    <source>
        <strain>NOD</strain>
        <tissue>Spleen</tissue>
    </source>
</reference>
<reference key="2">
    <citation type="journal article" date="2009" name="PLoS Biol.">
        <title>Lineage-specific biology revealed by a finished genome assembly of the mouse.</title>
        <authorList>
            <person name="Church D.M."/>
            <person name="Goodstadt L."/>
            <person name="Hillier L.W."/>
            <person name="Zody M.C."/>
            <person name="Goldstein S."/>
            <person name="She X."/>
            <person name="Bult C.J."/>
            <person name="Agarwala R."/>
            <person name="Cherry J.L."/>
            <person name="DiCuccio M."/>
            <person name="Hlavina W."/>
            <person name="Kapustin Y."/>
            <person name="Meric P."/>
            <person name="Maglott D."/>
            <person name="Birtle Z."/>
            <person name="Marques A.C."/>
            <person name="Graves T."/>
            <person name="Zhou S."/>
            <person name="Teague B."/>
            <person name="Potamousis K."/>
            <person name="Churas C."/>
            <person name="Place M."/>
            <person name="Herschleb J."/>
            <person name="Runnheim R."/>
            <person name="Forrest D."/>
            <person name="Amos-Landgraf J."/>
            <person name="Schwartz D.C."/>
            <person name="Cheng Z."/>
            <person name="Lindblad-Toh K."/>
            <person name="Eichler E.E."/>
            <person name="Ponting C.P."/>
        </authorList>
    </citation>
    <scope>NUCLEOTIDE SEQUENCE [LARGE SCALE GENOMIC DNA]</scope>
    <source>
        <strain>C57BL/6J</strain>
    </source>
</reference>
<reference key="3">
    <citation type="journal article" date="2004" name="Genome Res.">
        <title>The status, quality, and expansion of the NIH full-length cDNA project: the Mammalian Gene Collection (MGC).</title>
        <authorList>
            <consortium name="The MGC Project Team"/>
        </authorList>
    </citation>
    <scope>NUCLEOTIDE SEQUENCE [LARGE SCALE MRNA]</scope>
    <source>
        <strain>FVB/N</strain>
        <tissue>Colon</tissue>
    </source>
</reference>
<name>CC137_MOUSE</name>
<gene>
    <name type="primary">Ccdc137</name>
</gene>
<protein>
    <recommendedName>
        <fullName>Coiled-coil domain-containing protein 137</fullName>
    </recommendedName>
</protein>
<comment type="subcellular location">
    <subcellularLocation>
        <location evidence="1">Chromosome</location>
    </subcellularLocation>
</comment>
<comment type="sequence caution" evidence="4">
    <conflict type="erroneous termination">
        <sequence resource="EMBL-CDS" id="BAE33806"/>
    </conflict>
    <text>Truncated C-terminus.</text>
</comment>
<evidence type="ECO:0000250" key="1">
    <source>
        <dbReference type="UniProtKB" id="Q6PK04"/>
    </source>
</evidence>
<evidence type="ECO:0000255" key="2"/>
<evidence type="ECO:0000256" key="3">
    <source>
        <dbReference type="SAM" id="MobiDB-lite"/>
    </source>
</evidence>
<evidence type="ECO:0000305" key="4"/>
<proteinExistence type="evidence at transcript level"/>